<gene>
    <name evidence="1" type="primary">rutA</name>
    <name type="ordered locus">PSPPH_1048</name>
</gene>
<accession>Q48MQ4</accession>
<organism>
    <name type="scientific">Pseudomonas savastanoi pv. phaseolicola (strain 1448A / Race 6)</name>
    <name type="common">Pseudomonas syringae pv. phaseolicola (strain 1448A / Race 6)</name>
    <dbReference type="NCBI Taxonomy" id="264730"/>
    <lineage>
        <taxon>Bacteria</taxon>
        <taxon>Pseudomonadati</taxon>
        <taxon>Pseudomonadota</taxon>
        <taxon>Gammaproteobacteria</taxon>
        <taxon>Pseudomonadales</taxon>
        <taxon>Pseudomonadaceae</taxon>
        <taxon>Pseudomonas</taxon>
    </lineage>
</organism>
<reference key="1">
    <citation type="journal article" date="2005" name="J. Bacteriol.">
        <title>Whole-genome sequence analysis of Pseudomonas syringae pv. phaseolicola 1448A reveals divergence among pathovars in genes involved in virulence and transposition.</title>
        <authorList>
            <person name="Joardar V."/>
            <person name="Lindeberg M."/>
            <person name="Jackson R.W."/>
            <person name="Selengut J."/>
            <person name="Dodson R."/>
            <person name="Brinkac L.M."/>
            <person name="Daugherty S.C."/>
            <person name="DeBoy R.T."/>
            <person name="Durkin A.S."/>
            <person name="Gwinn Giglio M."/>
            <person name="Madupu R."/>
            <person name="Nelson W.C."/>
            <person name="Rosovitz M.J."/>
            <person name="Sullivan S.A."/>
            <person name="Crabtree J."/>
            <person name="Creasy T."/>
            <person name="Davidsen T.M."/>
            <person name="Haft D.H."/>
            <person name="Zafar N."/>
            <person name="Zhou L."/>
            <person name="Halpin R."/>
            <person name="Holley T."/>
            <person name="Khouri H.M."/>
            <person name="Feldblyum T.V."/>
            <person name="White O."/>
            <person name="Fraser C.M."/>
            <person name="Chatterjee A.K."/>
            <person name="Cartinhour S."/>
            <person name="Schneider D."/>
            <person name="Mansfield J.W."/>
            <person name="Collmer A."/>
            <person name="Buell R."/>
        </authorList>
    </citation>
    <scope>NUCLEOTIDE SEQUENCE [LARGE SCALE GENOMIC DNA]</scope>
    <source>
        <strain>1448A / Race 6</strain>
    </source>
</reference>
<name>RUTA_PSE14</name>
<feature type="chain" id="PRO_0000402636" description="Pyrimidine monooxygenase RutA">
    <location>
        <begin position="1"/>
        <end position="360"/>
    </location>
</feature>
<feature type="binding site" evidence="1">
    <location>
        <begin position="49"/>
        <end position="50"/>
    </location>
    <ligand>
        <name>FMN</name>
        <dbReference type="ChEBI" id="CHEBI:58210"/>
    </ligand>
</feature>
<feature type="binding site" evidence="1">
    <location>
        <position position="115"/>
    </location>
    <ligand>
        <name>FMN</name>
        <dbReference type="ChEBI" id="CHEBI:58210"/>
    </ligand>
</feature>
<feature type="binding site" evidence="1">
    <location>
        <position position="124"/>
    </location>
    <ligand>
        <name>FMN</name>
        <dbReference type="ChEBI" id="CHEBI:58210"/>
    </ligand>
</feature>
<feature type="binding site" evidence="1">
    <location>
        <begin position="140"/>
        <end position="141"/>
    </location>
    <ligand>
        <name>FMN</name>
        <dbReference type="ChEBI" id="CHEBI:58210"/>
    </ligand>
</feature>
<feature type="binding site" evidence="1">
    <location>
        <position position="190"/>
    </location>
    <ligand>
        <name>FMN</name>
        <dbReference type="ChEBI" id="CHEBI:58210"/>
    </ligand>
</feature>
<sequence length="360" mass="39531">MDIGIFIPIGNNGWLISSNAPQYMPTFELNKQIVQTAEGYGFDFALSMIKLRGFGGKTEFWEHNLESFTLMAGLAAVTSKIQLFATVATLTIPPAIAARMASTIDSISNGRFGINLVTGWQKPEYEQMGLWPGDEFFHTRYEYLAEYAQVLRDLWATGSSDFKGEHFSMQDCRVSPRPKADMKLICAGQSEAGMAFSAQYADYNFCFGKGVNTPTAFAPTAQKLIEANEKTGRNVTSCVLFMIIADDTDEAARARWEHIKDGADEEAIAWLSEKGSADKSAGSNLRQMADPTSAVNINMGTLVGSWATVARMLDEVASVPGTQGVMLTFDDFVKGVEDFGEKIQPLMTSRKHIAQLKEVV</sequence>
<proteinExistence type="inferred from homology"/>
<protein>
    <recommendedName>
        <fullName evidence="1">Pyrimidine monooxygenase RutA</fullName>
        <ecNumber evidence="1">1.14.99.46</ecNumber>
    </recommendedName>
</protein>
<comment type="function">
    <text evidence="1">Catalyzes the pyrimidine ring opening between N-3 and C-4 by an unusual flavin hydroperoxide-catalyzed mechanism, adding oxygen atoms in the process to yield ureidoacrylate peracid, that immediately reacts with FMN forming ureidoacrylate and FMN-N(5)-oxide. The FMN-N(5)-oxide reacts spontaneously with NADH to produce FMN. Requires the flavin reductase RutF to regenerate FMN in vivo.</text>
</comment>
<comment type="catalytic activity">
    <reaction evidence="1">
        <text>uracil + FMNH2 + NADH + O2 = (Z)-3-ureidoacrylate + FMN + NAD(+) + H2O + H(+)</text>
        <dbReference type="Rhea" id="RHEA:31587"/>
        <dbReference type="ChEBI" id="CHEBI:15377"/>
        <dbReference type="ChEBI" id="CHEBI:15378"/>
        <dbReference type="ChEBI" id="CHEBI:15379"/>
        <dbReference type="ChEBI" id="CHEBI:17568"/>
        <dbReference type="ChEBI" id="CHEBI:57540"/>
        <dbReference type="ChEBI" id="CHEBI:57618"/>
        <dbReference type="ChEBI" id="CHEBI:57945"/>
        <dbReference type="ChEBI" id="CHEBI:58210"/>
        <dbReference type="ChEBI" id="CHEBI:59891"/>
        <dbReference type="EC" id="1.14.99.46"/>
    </reaction>
</comment>
<comment type="catalytic activity">
    <reaction evidence="1">
        <text>thymine + FMNH2 + NADH + O2 = (Z)-2-methylureidoacrylate + FMN + NAD(+) + H2O + H(+)</text>
        <dbReference type="Rhea" id="RHEA:31599"/>
        <dbReference type="ChEBI" id="CHEBI:15377"/>
        <dbReference type="ChEBI" id="CHEBI:15378"/>
        <dbReference type="ChEBI" id="CHEBI:15379"/>
        <dbReference type="ChEBI" id="CHEBI:17821"/>
        <dbReference type="ChEBI" id="CHEBI:57540"/>
        <dbReference type="ChEBI" id="CHEBI:57618"/>
        <dbReference type="ChEBI" id="CHEBI:57945"/>
        <dbReference type="ChEBI" id="CHEBI:58210"/>
        <dbReference type="ChEBI" id="CHEBI:143783"/>
        <dbReference type="EC" id="1.14.99.46"/>
    </reaction>
</comment>
<comment type="similarity">
    <text evidence="1">Belongs to the NtaA/SnaA/DszA monooxygenase family. RutA subfamily.</text>
</comment>
<dbReference type="EC" id="1.14.99.46" evidence="1"/>
<dbReference type="EMBL" id="CP000058">
    <property type="protein sequence ID" value="AAZ34599.1"/>
    <property type="molecule type" value="Genomic_DNA"/>
</dbReference>
<dbReference type="RefSeq" id="WP_002552196.1">
    <property type="nucleotide sequence ID" value="NC_005773.3"/>
</dbReference>
<dbReference type="SMR" id="Q48MQ4"/>
<dbReference type="GeneID" id="61868409"/>
<dbReference type="KEGG" id="psp:PSPPH_1048"/>
<dbReference type="eggNOG" id="COG2141">
    <property type="taxonomic scope" value="Bacteria"/>
</dbReference>
<dbReference type="HOGENOM" id="CLU_027853_1_1_6"/>
<dbReference type="Proteomes" id="UP000000551">
    <property type="component" value="Chromosome"/>
</dbReference>
<dbReference type="GO" id="GO:0008726">
    <property type="term" value="F:alkanesulfonate monooxygenase activity"/>
    <property type="evidence" value="ECO:0007669"/>
    <property type="project" value="TreeGrafter"/>
</dbReference>
<dbReference type="GO" id="GO:0052614">
    <property type="term" value="F:uracil oxygenase activity"/>
    <property type="evidence" value="ECO:0007669"/>
    <property type="project" value="UniProtKB-EC"/>
</dbReference>
<dbReference type="GO" id="GO:0046306">
    <property type="term" value="P:alkanesulfonate catabolic process"/>
    <property type="evidence" value="ECO:0007669"/>
    <property type="project" value="TreeGrafter"/>
</dbReference>
<dbReference type="GO" id="GO:0019740">
    <property type="term" value="P:nitrogen utilization"/>
    <property type="evidence" value="ECO:0007669"/>
    <property type="project" value="UniProtKB-UniRule"/>
</dbReference>
<dbReference type="GO" id="GO:0006212">
    <property type="term" value="P:uracil catabolic process"/>
    <property type="evidence" value="ECO:0007669"/>
    <property type="project" value="UniProtKB-UniRule"/>
</dbReference>
<dbReference type="CDD" id="cd01094">
    <property type="entry name" value="Alkanesulfonate_monoxygenase"/>
    <property type="match status" value="1"/>
</dbReference>
<dbReference type="FunFam" id="3.20.20.30:FF:000003">
    <property type="entry name" value="Pyrimidine monooxygenase RutA"/>
    <property type="match status" value="1"/>
</dbReference>
<dbReference type="Gene3D" id="3.20.20.30">
    <property type="entry name" value="Luciferase-like domain"/>
    <property type="match status" value="1"/>
</dbReference>
<dbReference type="HAMAP" id="MF_01699">
    <property type="entry name" value="RutA"/>
    <property type="match status" value="1"/>
</dbReference>
<dbReference type="InterPro" id="IPR011251">
    <property type="entry name" value="Luciferase-like_dom"/>
</dbReference>
<dbReference type="InterPro" id="IPR036661">
    <property type="entry name" value="Luciferase-like_sf"/>
</dbReference>
<dbReference type="InterPro" id="IPR019914">
    <property type="entry name" value="Pyrimidine_monooxygenase_RutA"/>
</dbReference>
<dbReference type="InterPro" id="IPR050172">
    <property type="entry name" value="SsuD_RutA_monooxygenase"/>
</dbReference>
<dbReference type="NCBIfam" id="TIGR03612">
    <property type="entry name" value="RutA"/>
    <property type="match status" value="1"/>
</dbReference>
<dbReference type="PANTHER" id="PTHR42847">
    <property type="entry name" value="ALKANESULFONATE MONOOXYGENASE"/>
    <property type="match status" value="1"/>
</dbReference>
<dbReference type="PANTHER" id="PTHR42847:SF4">
    <property type="entry name" value="ALKANESULFONATE MONOOXYGENASE-RELATED"/>
    <property type="match status" value="1"/>
</dbReference>
<dbReference type="Pfam" id="PF00296">
    <property type="entry name" value="Bac_luciferase"/>
    <property type="match status" value="1"/>
</dbReference>
<dbReference type="SUPFAM" id="SSF51679">
    <property type="entry name" value="Bacterial luciferase-like"/>
    <property type="match status" value="1"/>
</dbReference>
<keyword id="KW-0285">Flavoprotein</keyword>
<keyword id="KW-0288">FMN</keyword>
<keyword id="KW-0503">Monooxygenase</keyword>
<keyword id="KW-0521">NADP</keyword>
<keyword id="KW-0560">Oxidoreductase</keyword>
<evidence type="ECO:0000255" key="1">
    <source>
        <dbReference type="HAMAP-Rule" id="MF_01699"/>
    </source>
</evidence>